<proteinExistence type="inferred from homology"/>
<sequence>MSEAFDSRASKALPIEVLISPFVRFARMEAASGILLIVSTAAALVWANSPWKSSYDAIWDVPMVAGVGNFLLTESRHHWINDGLMSIFFFLVGLEIKREVLIGELTSLRNAAFPLIAAVGGTVVPAVIYLLCVGGGVAQKGWGIPMATDIAFALGVLILLGNRIPPSLRVFVTALAIVDDIIAVLVIALFYTHEIHLVSLLVALGGVGIAFGFNLLGISKPSVYALIGVCIWAAVLKSGVHATVAGVLLAFTIPARNYLDRDFFVKRGRWLLERFEKSEPHSFESHTAIHTLQHQCDMIESPLHRLEHGLQPWVSFLIMPLFAFSNAGVRFIGNIGVAVKHPVSIGVALGLFLGKPLGIWLFAWLAVKSRVANAPPELSWWQIFGASWICGIGFTMSLFIASLAFGYGNLLDMSKIGTLAASLVAGVCGSVVLWRRSALGTSEPPVSPATTSASV</sequence>
<protein>
    <recommendedName>
        <fullName evidence="1">Na(+)/H(+) antiporter NhaA</fullName>
    </recommendedName>
    <alternativeName>
        <fullName evidence="1">Sodium/proton antiporter NhaA</fullName>
    </alternativeName>
</protein>
<accession>Q1IJ81</accession>
<name>NHAA_KORVE</name>
<organism>
    <name type="scientific">Koribacter versatilis (strain Ellin345)</name>
    <dbReference type="NCBI Taxonomy" id="204669"/>
    <lineage>
        <taxon>Bacteria</taxon>
        <taxon>Pseudomonadati</taxon>
        <taxon>Acidobacteriota</taxon>
        <taxon>Terriglobia</taxon>
        <taxon>Terriglobales</taxon>
        <taxon>Candidatus Korobacteraceae</taxon>
        <taxon>Candidatus Korobacter</taxon>
    </lineage>
</organism>
<feature type="chain" id="PRO_0000334218" description="Na(+)/H(+) antiporter NhaA">
    <location>
        <begin position="1"/>
        <end position="455"/>
    </location>
</feature>
<feature type="transmembrane region" description="Helical" evidence="1">
    <location>
        <begin position="31"/>
        <end position="51"/>
    </location>
</feature>
<feature type="transmembrane region" description="Helical" evidence="1">
    <location>
        <begin position="83"/>
        <end position="103"/>
    </location>
</feature>
<feature type="transmembrane region" description="Helical" evidence="1">
    <location>
        <begin position="113"/>
        <end position="133"/>
    </location>
</feature>
<feature type="transmembrane region" description="Helical" evidence="1">
    <location>
        <begin position="141"/>
        <end position="161"/>
    </location>
</feature>
<feature type="transmembrane region" description="Helical" evidence="1">
    <location>
        <begin position="170"/>
        <end position="190"/>
    </location>
</feature>
<feature type="transmembrane region" description="Helical" evidence="1">
    <location>
        <begin position="198"/>
        <end position="218"/>
    </location>
</feature>
<feature type="transmembrane region" description="Helical" evidence="1">
    <location>
        <begin position="231"/>
        <end position="251"/>
    </location>
</feature>
<feature type="transmembrane region" description="Helical" evidence="1">
    <location>
        <begin position="309"/>
        <end position="329"/>
    </location>
</feature>
<feature type="transmembrane region" description="Helical" evidence="1">
    <location>
        <begin position="345"/>
        <end position="365"/>
    </location>
</feature>
<feature type="transmembrane region" description="Helical" evidence="1">
    <location>
        <begin position="383"/>
        <end position="403"/>
    </location>
</feature>
<feature type="transmembrane region" description="Helical" evidence="1">
    <location>
        <begin position="414"/>
        <end position="434"/>
    </location>
</feature>
<comment type="function">
    <text evidence="1">Na(+)/H(+) antiporter that extrudes sodium in exchange for external protons.</text>
</comment>
<comment type="catalytic activity">
    <reaction evidence="1">
        <text>Na(+)(in) + 2 H(+)(out) = Na(+)(out) + 2 H(+)(in)</text>
        <dbReference type="Rhea" id="RHEA:29251"/>
        <dbReference type="ChEBI" id="CHEBI:15378"/>
        <dbReference type="ChEBI" id="CHEBI:29101"/>
    </reaction>
    <physiologicalReaction direction="left-to-right" evidence="1">
        <dbReference type="Rhea" id="RHEA:29252"/>
    </physiologicalReaction>
</comment>
<comment type="subcellular location">
    <subcellularLocation>
        <location evidence="1">Cell inner membrane</location>
        <topology evidence="1">Multi-pass membrane protein</topology>
    </subcellularLocation>
</comment>
<comment type="similarity">
    <text evidence="1">Belongs to the NhaA Na(+)/H(+) (TC 2.A.33) antiporter family.</text>
</comment>
<gene>
    <name evidence="1" type="primary">nhaA</name>
    <name type="ordered locus">Acid345_4069</name>
</gene>
<dbReference type="EMBL" id="CP000360">
    <property type="protein sequence ID" value="ABF43069.1"/>
    <property type="molecule type" value="Genomic_DNA"/>
</dbReference>
<dbReference type="RefSeq" id="WP_011524868.1">
    <property type="nucleotide sequence ID" value="NC_008009.1"/>
</dbReference>
<dbReference type="SMR" id="Q1IJ81"/>
<dbReference type="STRING" id="204669.Acid345_4069"/>
<dbReference type="EnsemblBacteria" id="ABF43069">
    <property type="protein sequence ID" value="ABF43069"/>
    <property type="gene ID" value="Acid345_4069"/>
</dbReference>
<dbReference type="KEGG" id="aba:Acid345_4069"/>
<dbReference type="eggNOG" id="COG3004">
    <property type="taxonomic scope" value="Bacteria"/>
</dbReference>
<dbReference type="HOGENOM" id="CLU_015803_1_2_0"/>
<dbReference type="OrthoDB" id="9808135at2"/>
<dbReference type="Proteomes" id="UP000002432">
    <property type="component" value="Chromosome"/>
</dbReference>
<dbReference type="GO" id="GO:0005886">
    <property type="term" value="C:plasma membrane"/>
    <property type="evidence" value="ECO:0007669"/>
    <property type="project" value="UniProtKB-SubCell"/>
</dbReference>
<dbReference type="GO" id="GO:0015385">
    <property type="term" value="F:sodium:proton antiporter activity"/>
    <property type="evidence" value="ECO:0007669"/>
    <property type="project" value="TreeGrafter"/>
</dbReference>
<dbReference type="GO" id="GO:0006885">
    <property type="term" value="P:regulation of pH"/>
    <property type="evidence" value="ECO:0007669"/>
    <property type="project" value="InterPro"/>
</dbReference>
<dbReference type="Gene3D" id="1.20.1530.10">
    <property type="entry name" value="Na+/H+ antiporter like domain"/>
    <property type="match status" value="1"/>
</dbReference>
<dbReference type="HAMAP" id="MF_01844">
    <property type="entry name" value="NhaA"/>
    <property type="match status" value="1"/>
</dbReference>
<dbReference type="InterPro" id="IPR023171">
    <property type="entry name" value="Na/H_antiporter_dom_sf"/>
</dbReference>
<dbReference type="InterPro" id="IPR004670">
    <property type="entry name" value="NhaA"/>
</dbReference>
<dbReference type="NCBIfam" id="TIGR00773">
    <property type="entry name" value="NhaA"/>
    <property type="match status" value="1"/>
</dbReference>
<dbReference type="PANTHER" id="PTHR30341:SF0">
    <property type="entry name" value="NA(+)_H(+) ANTIPORTER NHAA"/>
    <property type="match status" value="1"/>
</dbReference>
<dbReference type="PANTHER" id="PTHR30341">
    <property type="entry name" value="SODIUM ION/PROTON ANTIPORTER NHAA-RELATED"/>
    <property type="match status" value="1"/>
</dbReference>
<dbReference type="Pfam" id="PF06965">
    <property type="entry name" value="Na_H_antiport_1"/>
    <property type="match status" value="1"/>
</dbReference>
<reference key="1">
    <citation type="journal article" date="2009" name="Appl. Environ. Microbiol.">
        <title>Three genomes from the phylum Acidobacteria provide insight into the lifestyles of these microorganisms in soils.</title>
        <authorList>
            <person name="Ward N.L."/>
            <person name="Challacombe J.F."/>
            <person name="Janssen P.H."/>
            <person name="Henrissat B."/>
            <person name="Coutinho P.M."/>
            <person name="Wu M."/>
            <person name="Xie G."/>
            <person name="Haft D.H."/>
            <person name="Sait M."/>
            <person name="Badger J."/>
            <person name="Barabote R.D."/>
            <person name="Bradley B."/>
            <person name="Brettin T.S."/>
            <person name="Brinkac L.M."/>
            <person name="Bruce D."/>
            <person name="Creasy T."/>
            <person name="Daugherty S.C."/>
            <person name="Davidsen T.M."/>
            <person name="DeBoy R.T."/>
            <person name="Detter J.C."/>
            <person name="Dodson R.J."/>
            <person name="Durkin A.S."/>
            <person name="Ganapathy A."/>
            <person name="Gwinn-Giglio M."/>
            <person name="Han C.S."/>
            <person name="Khouri H."/>
            <person name="Kiss H."/>
            <person name="Kothari S.P."/>
            <person name="Madupu R."/>
            <person name="Nelson K.E."/>
            <person name="Nelson W.C."/>
            <person name="Paulsen I."/>
            <person name="Penn K."/>
            <person name="Ren Q."/>
            <person name="Rosovitz M.J."/>
            <person name="Selengut J.D."/>
            <person name="Shrivastava S."/>
            <person name="Sullivan S.A."/>
            <person name="Tapia R."/>
            <person name="Thompson L.S."/>
            <person name="Watkins K.L."/>
            <person name="Yang Q."/>
            <person name="Yu C."/>
            <person name="Zafar N."/>
            <person name="Zhou L."/>
            <person name="Kuske C.R."/>
        </authorList>
    </citation>
    <scope>NUCLEOTIDE SEQUENCE [LARGE SCALE GENOMIC DNA]</scope>
    <source>
        <strain>Ellin345</strain>
    </source>
</reference>
<evidence type="ECO:0000255" key="1">
    <source>
        <dbReference type="HAMAP-Rule" id="MF_01844"/>
    </source>
</evidence>
<keyword id="KW-0050">Antiport</keyword>
<keyword id="KW-0997">Cell inner membrane</keyword>
<keyword id="KW-1003">Cell membrane</keyword>
<keyword id="KW-0406">Ion transport</keyword>
<keyword id="KW-0472">Membrane</keyword>
<keyword id="KW-1185">Reference proteome</keyword>
<keyword id="KW-0915">Sodium</keyword>
<keyword id="KW-0739">Sodium transport</keyword>
<keyword id="KW-0812">Transmembrane</keyword>
<keyword id="KW-1133">Transmembrane helix</keyword>
<keyword id="KW-0813">Transport</keyword>